<dbReference type="EC" id="3.1.11.6" evidence="1"/>
<dbReference type="EMBL" id="AM711867">
    <property type="protein sequence ID" value="CAN02299.1"/>
    <property type="molecule type" value="Genomic_DNA"/>
</dbReference>
<dbReference type="RefSeq" id="WP_012038919.1">
    <property type="nucleotide sequence ID" value="NC_009480.1"/>
</dbReference>
<dbReference type="SMR" id="A5CT74"/>
<dbReference type="KEGG" id="cmi:CMM_2229"/>
<dbReference type="eggNOG" id="COG1570">
    <property type="taxonomic scope" value="Bacteria"/>
</dbReference>
<dbReference type="HOGENOM" id="CLU_023625_2_1_11"/>
<dbReference type="OrthoDB" id="9802795at2"/>
<dbReference type="Proteomes" id="UP000001564">
    <property type="component" value="Chromosome"/>
</dbReference>
<dbReference type="GO" id="GO:0005737">
    <property type="term" value="C:cytoplasm"/>
    <property type="evidence" value="ECO:0007669"/>
    <property type="project" value="UniProtKB-SubCell"/>
</dbReference>
<dbReference type="GO" id="GO:0009318">
    <property type="term" value="C:exodeoxyribonuclease VII complex"/>
    <property type="evidence" value="ECO:0007669"/>
    <property type="project" value="InterPro"/>
</dbReference>
<dbReference type="GO" id="GO:0008855">
    <property type="term" value="F:exodeoxyribonuclease VII activity"/>
    <property type="evidence" value="ECO:0007669"/>
    <property type="project" value="UniProtKB-UniRule"/>
</dbReference>
<dbReference type="GO" id="GO:0003676">
    <property type="term" value="F:nucleic acid binding"/>
    <property type="evidence" value="ECO:0007669"/>
    <property type="project" value="InterPro"/>
</dbReference>
<dbReference type="GO" id="GO:0006308">
    <property type="term" value="P:DNA catabolic process"/>
    <property type="evidence" value="ECO:0007669"/>
    <property type="project" value="UniProtKB-UniRule"/>
</dbReference>
<dbReference type="CDD" id="cd04489">
    <property type="entry name" value="ExoVII_LU_OBF"/>
    <property type="match status" value="1"/>
</dbReference>
<dbReference type="HAMAP" id="MF_00378">
    <property type="entry name" value="Exonuc_7_L"/>
    <property type="match status" value="1"/>
</dbReference>
<dbReference type="InterPro" id="IPR003753">
    <property type="entry name" value="Exonuc_VII_L"/>
</dbReference>
<dbReference type="InterPro" id="IPR020579">
    <property type="entry name" value="Exonuc_VII_lsu_C"/>
</dbReference>
<dbReference type="InterPro" id="IPR025824">
    <property type="entry name" value="OB-fold_nuc-bd_dom"/>
</dbReference>
<dbReference type="NCBIfam" id="TIGR00237">
    <property type="entry name" value="xseA"/>
    <property type="match status" value="1"/>
</dbReference>
<dbReference type="PANTHER" id="PTHR30008">
    <property type="entry name" value="EXODEOXYRIBONUCLEASE 7 LARGE SUBUNIT"/>
    <property type="match status" value="1"/>
</dbReference>
<dbReference type="PANTHER" id="PTHR30008:SF0">
    <property type="entry name" value="EXODEOXYRIBONUCLEASE 7 LARGE SUBUNIT"/>
    <property type="match status" value="1"/>
</dbReference>
<dbReference type="Pfam" id="PF02601">
    <property type="entry name" value="Exonuc_VII_L"/>
    <property type="match status" value="2"/>
</dbReference>
<dbReference type="Pfam" id="PF13742">
    <property type="entry name" value="tRNA_anti_2"/>
    <property type="match status" value="1"/>
</dbReference>
<reference key="1">
    <citation type="journal article" date="2008" name="J. Bacteriol.">
        <title>The genome sequence of the tomato-pathogenic actinomycete Clavibacter michiganensis subsp. michiganensis NCPPB382 reveals a large island involved in pathogenicity.</title>
        <authorList>
            <person name="Gartemann K.-H."/>
            <person name="Abt B."/>
            <person name="Bekel T."/>
            <person name="Burger A."/>
            <person name="Engemann J."/>
            <person name="Fluegel M."/>
            <person name="Gaigalat L."/>
            <person name="Goesmann A."/>
            <person name="Graefen I."/>
            <person name="Kalinowski J."/>
            <person name="Kaup O."/>
            <person name="Kirchner O."/>
            <person name="Krause L."/>
            <person name="Linke B."/>
            <person name="McHardy A."/>
            <person name="Meyer F."/>
            <person name="Pohle S."/>
            <person name="Rueckert C."/>
            <person name="Schneiker S."/>
            <person name="Zellermann E.-M."/>
            <person name="Puehler A."/>
            <person name="Eichenlaub R."/>
            <person name="Kaiser O."/>
            <person name="Bartels D."/>
        </authorList>
    </citation>
    <scope>NUCLEOTIDE SEQUENCE [LARGE SCALE GENOMIC DNA]</scope>
    <source>
        <strain>NCPPB 382</strain>
    </source>
</reference>
<sequence length="438" mass="47019">MSETRSVSMPAADAPTVDAPWPVSVLSGKIKGWIDRLGTAWVEGEITQWGGSGGNVYGKLKDLDVDATISFTVWSSVRAKIPADLGQGARVVALVKPNYWVKGGTLTMQVLEMRHVGLGDLLERLERLRQTLRAEGLFDADRKRRLPFLPGCIGLITGKDSDAEKDVLRNAQLRWPSVRFRVVHTAVQGDRAAGEVTRAIGVLDEDPEVDVIVIARGGGDFQNLLVFSDEKLVRTAAACRTPLVSAIGHEADRPLLDDVADLRASTPTDAAKRVVPDVSEELSRVQQARARIGMRLTSQVRGEIDRIEQLRSRPVLSSTAWIVDSRAEELGRYIARSAELAGRVVERGMQQTSELSRQLRTLSPQHVLDRGYAIVQTADGSALRAPADAPDGTGLALRLAAGALGATSTGPTDDIPSSAARLPSSPAPDARPASGAES</sequence>
<organism>
    <name type="scientific">Clavibacter michiganensis subsp. michiganensis (strain NCPPB 382)</name>
    <dbReference type="NCBI Taxonomy" id="443906"/>
    <lineage>
        <taxon>Bacteria</taxon>
        <taxon>Bacillati</taxon>
        <taxon>Actinomycetota</taxon>
        <taxon>Actinomycetes</taxon>
        <taxon>Micrococcales</taxon>
        <taxon>Microbacteriaceae</taxon>
        <taxon>Clavibacter</taxon>
    </lineage>
</organism>
<evidence type="ECO:0000255" key="1">
    <source>
        <dbReference type="HAMAP-Rule" id="MF_00378"/>
    </source>
</evidence>
<evidence type="ECO:0000256" key="2">
    <source>
        <dbReference type="SAM" id="MobiDB-lite"/>
    </source>
</evidence>
<protein>
    <recommendedName>
        <fullName evidence="1">Exodeoxyribonuclease 7 large subunit</fullName>
        <ecNumber evidence="1">3.1.11.6</ecNumber>
    </recommendedName>
    <alternativeName>
        <fullName evidence="1">Exodeoxyribonuclease VII large subunit</fullName>
        <shortName evidence="1">Exonuclease VII large subunit</shortName>
    </alternativeName>
</protein>
<feature type="chain" id="PRO_1000048767" description="Exodeoxyribonuclease 7 large subunit">
    <location>
        <begin position="1"/>
        <end position="438"/>
    </location>
</feature>
<feature type="region of interest" description="Disordered" evidence="2">
    <location>
        <begin position="405"/>
        <end position="438"/>
    </location>
</feature>
<gene>
    <name evidence="1" type="primary">xseA</name>
    <name type="ordered locus">CMM_2229</name>
</gene>
<accession>A5CT74</accession>
<name>EX7L_CLAM3</name>
<comment type="function">
    <text evidence="1">Bidirectionally degrades single-stranded DNA into large acid-insoluble oligonucleotides, which are then degraded further into small acid-soluble oligonucleotides.</text>
</comment>
<comment type="catalytic activity">
    <reaction evidence="1">
        <text>Exonucleolytic cleavage in either 5'- to 3'- or 3'- to 5'-direction to yield nucleoside 5'-phosphates.</text>
        <dbReference type="EC" id="3.1.11.6"/>
    </reaction>
</comment>
<comment type="subunit">
    <text evidence="1">Heterooligomer composed of large and small subunits.</text>
</comment>
<comment type="subcellular location">
    <subcellularLocation>
        <location evidence="1">Cytoplasm</location>
    </subcellularLocation>
</comment>
<comment type="similarity">
    <text evidence="1">Belongs to the XseA family.</text>
</comment>
<proteinExistence type="inferred from homology"/>
<keyword id="KW-0963">Cytoplasm</keyword>
<keyword id="KW-0269">Exonuclease</keyword>
<keyword id="KW-0378">Hydrolase</keyword>
<keyword id="KW-0540">Nuclease</keyword>